<reference evidence="10" key="1">
    <citation type="journal article" date="1997" name="Glycobiology">
        <title>Isolation and characterization of a class II alpha-mannosidase cDNA from lepidopteran insect cells.</title>
        <authorList>
            <person name="Jarvis D.L."/>
            <person name="Bohlmeyer D.A."/>
            <person name="Liao Y.F."/>
            <person name="Lomax K.K."/>
            <person name="Merkle R.K."/>
            <person name="Weinkauf C."/>
            <person name="Moremen K.W."/>
        </authorList>
    </citation>
    <scope>NUCLEOTIDE SEQUENCE [MRNA]</scope>
    <scope>CATALYTIC ACTIVITY</scope>
    <scope>ACTIVITY REGULATION</scope>
    <scope>SUBCELLULAR LOCATION</scope>
    <scope>GLYCOSYLATION</scope>
</reference>
<accession>O18497</accession>
<dbReference type="EC" id="3.2.1.114" evidence="7"/>
<dbReference type="EMBL" id="AF005034">
    <property type="protein sequence ID" value="AAB62719.1"/>
    <property type="molecule type" value="mRNA"/>
</dbReference>
<dbReference type="PIR" id="T29089">
    <property type="entry name" value="T29089"/>
</dbReference>
<dbReference type="SMR" id="O18497"/>
<dbReference type="CAZy" id="GH38">
    <property type="family name" value="Glycoside Hydrolase Family 38"/>
</dbReference>
<dbReference type="UniPathway" id="UPA00378"/>
<dbReference type="Proteomes" id="UP000829999">
    <property type="component" value="Unplaced"/>
</dbReference>
<dbReference type="GO" id="GO:0005783">
    <property type="term" value="C:endoplasmic reticulum"/>
    <property type="evidence" value="ECO:0007669"/>
    <property type="project" value="UniProtKB-KW"/>
</dbReference>
<dbReference type="GO" id="GO:0000139">
    <property type="term" value="C:Golgi membrane"/>
    <property type="evidence" value="ECO:0000250"/>
    <property type="project" value="UniProtKB"/>
</dbReference>
<dbReference type="GO" id="GO:0030246">
    <property type="term" value="F:carbohydrate binding"/>
    <property type="evidence" value="ECO:0007669"/>
    <property type="project" value="InterPro"/>
</dbReference>
<dbReference type="GO" id="GO:0004572">
    <property type="term" value="F:mannosyl-oligosaccharide 1,3-1,6-alpha-mannosidase activity"/>
    <property type="evidence" value="ECO:0000314"/>
    <property type="project" value="UniProtKB"/>
</dbReference>
<dbReference type="GO" id="GO:0046872">
    <property type="term" value="F:metal ion binding"/>
    <property type="evidence" value="ECO:0007669"/>
    <property type="project" value="UniProtKB-KW"/>
</dbReference>
<dbReference type="GO" id="GO:0006013">
    <property type="term" value="P:mannose metabolic process"/>
    <property type="evidence" value="ECO:0000314"/>
    <property type="project" value="UniProtKB"/>
</dbReference>
<dbReference type="GO" id="GO:0006491">
    <property type="term" value="P:N-glycan processing"/>
    <property type="evidence" value="ECO:0000250"/>
    <property type="project" value="UniProtKB"/>
</dbReference>
<dbReference type="GO" id="GO:0006486">
    <property type="term" value="P:protein glycosylation"/>
    <property type="evidence" value="ECO:0007669"/>
    <property type="project" value="UniProtKB-UniPathway"/>
</dbReference>
<dbReference type="CDD" id="cd10809">
    <property type="entry name" value="GH38N_AMII_GMII_SfManIII_like"/>
    <property type="match status" value="1"/>
</dbReference>
<dbReference type="FunFam" id="1.20.1270.50:FF:000001">
    <property type="entry name" value="Alpha-mannosidase"/>
    <property type="match status" value="1"/>
</dbReference>
<dbReference type="FunFam" id="3.20.110.10:FF:000007">
    <property type="entry name" value="Alpha-mannosidase"/>
    <property type="match status" value="1"/>
</dbReference>
<dbReference type="Gene3D" id="3.20.110.10">
    <property type="entry name" value="Glycoside hydrolase 38, N terminal domain"/>
    <property type="match status" value="1"/>
</dbReference>
<dbReference type="Gene3D" id="1.20.1270.50">
    <property type="entry name" value="Glycoside hydrolase family 38, central domain"/>
    <property type="match status" value="1"/>
</dbReference>
<dbReference type="Gene3D" id="2.60.40.1180">
    <property type="entry name" value="Golgi alpha-mannosidase II"/>
    <property type="match status" value="1"/>
</dbReference>
<dbReference type="Gene3D" id="2.70.98.30">
    <property type="entry name" value="Golgi alpha-mannosidase II, domain 4"/>
    <property type="match status" value="1"/>
</dbReference>
<dbReference type="InterPro" id="IPR011013">
    <property type="entry name" value="Gal_mutarotase_sf_dom"/>
</dbReference>
<dbReference type="InterPro" id="IPR011330">
    <property type="entry name" value="Glyco_hydro/deAcase_b/a-brl"/>
</dbReference>
<dbReference type="InterPro" id="IPR011682">
    <property type="entry name" value="Glyco_hydro_38_C"/>
</dbReference>
<dbReference type="InterPro" id="IPR015341">
    <property type="entry name" value="Glyco_hydro_38_cen"/>
</dbReference>
<dbReference type="InterPro" id="IPR037094">
    <property type="entry name" value="Glyco_hydro_38_cen_sf"/>
</dbReference>
<dbReference type="InterPro" id="IPR000602">
    <property type="entry name" value="Glyco_hydro_38_N"/>
</dbReference>
<dbReference type="InterPro" id="IPR027291">
    <property type="entry name" value="Glyco_hydro_38_N_sf"/>
</dbReference>
<dbReference type="InterPro" id="IPR028995">
    <property type="entry name" value="Glyco_hydro_57/38_cen_sf"/>
</dbReference>
<dbReference type="InterPro" id="IPR013780">
    <property type="entry name" value="Glyco_hydro_b"/>
</dbReference>
<dbReference type="InterPro" id="IPR050843">
    <property type="entry name" value="Glycosyl_Hydrlase_38"/>
</dbReference>
<dbReference type="PANTHER" id="PTHR11607">
    <property type="entry name" value="ALPHA-MANNOSIDASE"/>
    <property type="match status" value="1"/>
</dbReference>
<dbReference type="PANTHER" id="PTHR11607:SF70">
    <property type="entry name" value="ALPHA-MANNOSIDASE"/>
    <property type="match status" value="1"/>
</dbReference>
<dbReference type="Pfam" id="PF09261">
    <property type="entry name" value="Alpha-mann_mid"/>
    <property type="match status" value="1"/>
</dbReference>
<dbReference type="Pfam" id="PF07748">
    <property type="entry name" value="Glyco_hydro_38C"/>
    <property type="match status" value="1"/>
</dbReference>
<dbReference type="Pfam" id="PF01074">
    <property type="entry name" value="Glyco_hydro_38N"/>
    <property type="match status" value="1"/>
</dbReference>
<dbReference type="SMART" id="SM00872">
    <property type="entry name" value="Alpha-mann_mid"/>
    <property type="match status" value="1"/>
</dbReference>
<dbReference type="SUPFAM" id="SSF88688">
    <property type="entry name" value="Families 57/38 glycoside transferase middle domain"/>
    <property type="match status" value="1"/>
</dbReference>
<dbReference type="SUPFAM" id="SSF74650">
    <property type="entry name" value="Galactose mutarotase-like"/>
    <property type="match status" value="1"/>
</dbReference>
<dbReference type="SUPFAM" id="SSF88713">
    <property type="entry name" value="Glycoside hydrolase/deacetylase"/>
    <property type="match status" value="1"/>
</dbReference>
<organism evidence="10">
    <name type="scientific">Spodoptera frugiperda</name>
    <name type="common">Fall armyworm</name>
    <dbReference type="NCBI Taxonomy" id="7108"/>
    <lineage>
        <taxon>Eukaryota</taxon>
        <taxon>Metazoa</taxon>
        <taxon>Ecdysozoa</taxon>
        <taxon>Arthropoda</taxon>
        <taxon>Hexapoda</taxon>
        <taxon>Insecta</taxon>
        <taxon>Pterygota</taxon>
        <taxon>Neoptera</taxon>
        <taxon>Endopterygota</taxon>
        <taxon>Lepidoptera</taxon>
        <taxon>Glossata</taxon>
        <taxon>Ditrysia</taxon>
        <taxon>Noctuoidea</taxon>
        <taxon>Noctuidae</taxon>
        <taxon>Amphipyrinae</taxon>
        <taxon>Spodoptera</taxon>
    </lineage>
</organism>
<feature type="chain" id="PRO_0000450694" description="Alpha-mannosidase 2">
    <location>
        <begin position="1"/>
        <end position="1130"/>
    </location>
</feature>
<feature type="topological domain" description="Cytoplasmic" evidence="9">
    <location>
        <begin position="1"/>
        <end position="14"/>
    </location>
</feature>
<feature type="transmembrane region" description="Helical; Signal-anchor for type II membrane protein" evidence="4">
    <location>
        <begin position="15"/>
        <end position="35"/>
    </location>
</feature>
<feature type="topological domain" description="Lumenal" evidence="9">
    <location>
        <begin position="36"/>
        <end position="1130"/>
    </location>
</feature>
<feature type="active site" description="Nucleophile" evidence="3">
    <location>
        <position position="247"/>
    </location>
</feature>
<feature type="binding site" evidence="3">
    <location>
        <position position="133"/>
    </location>
    <ligand>
        <name>Zn(2+)</name>
        <dbReference type="ChEBI" id="CHEBI:29105"/>
    </ligand>
</feature>
<feature type="binding site" evidence="3">
    <location>
        <position position="135"/>
    </location>
    <ligand>
        <name>Zn(2+)</name>
        <dbReference type="ChEBI" id="CHEBI:29105"/>
    </ligand>
</feature>
<feature type="binding site" evidence="3">
    <location>
        <position position="247"/>
    </location>
    <ligand>
        <name>Zn(2+)</name>
        <dbReference type="ChEBI" id="CHEBI:29105"/>
    </ligand>
</feature>
<feature type="binding site" evidence="3">
    <location>
        <position position="527"/>
    </location>
    <ligand>
        <name>Zn(2+)</name>
        <dbReference type="ChEBI" id="CHEBI:29105"/>
    </ligand>
</feature>
<feature type="glycosylation site" description="N-linked (GlcNAc...) asparagine" evidence="5">
    <location>
        <position position="117"/>
    </location>
</feature>
<feature type="glycosylation site" description="N-linked (GlcNAc...) asparagine" evidence="5">
    <location>
        <position position="166"/>
    </location>
</feature>
<feature type="glycosylation site" description="N-linked (GlcNAc...) asparagine" evidence="5">
    <location>
        <position position="622"/>
    </location>
</feature>
<feature type="glycosylation site" description="N-linked (GlcNAc...) asparagine" evidence="5">
    <location>
        <position position="683"/>
    </location>
</feature>
<feature type="glycosylation site" description="N-linked (GlcNAc...) asparagine" evidence="5">
    <location>
        <position position="1056"/>
    </location>
</feature>
<feature type="glycosylation site" description="N-linked (GlcNAc...) asparagine" evidence="5">
    <location>
        <position position="1095"/>
    </location>
</feature>
<feature type="disulfide bond" description="Interchain (with C-414)" evidence="3">
    <location>
        <position position="553"/>
    </location>
</feature>
<evidence type="ECO:0000250" key="1">
    <source>
        <dbReference type="UniProtKB" id="P28494"/>
    </source>
</evidence>
<evidence type="ECO:0000250" key="2">
    <source>
        <dbReference type="UniProtKB" id="Q24451"/>
    </source>
</evidence>
<evidence type="ECO:0000250" key="3">
    <source>
        <dbReference type="UniProtKB" id="Q29451"/>
    </source>
</evidence>
<evidence type="ECO:0000255" key="4"/>
<evidence type="ECO:0000255" key="5">
    <source>
        <dbReference type="PROSITE-ProRule" id="PRU00498"/>
    </source>
</evidence>
<evidence type="ECO:0000255" key="6">
    <source>
        <dbReference type="RuleBase" id="RU361199"/>
    </source>
</evidence>
<evidence type="ECO:0000269" key="7">
    <source>
    </source>
</evidence>
<evidence type="ECO:0000303" key="8">
    <source>
    </source>
</evidence>
<evidence type="ECO:0000305" key="9"/>
<evidence type="ECO:0000312" key="10">
    <source>
        <dbReference type="EMBL" id="AAB62719.1"/>
    </source>
</evidence>
<comment type="function">
    <text evidence="1">Catalyzes the first committed step in the biosynthesis of complex N-glycans. It controls conversion of high mannose to complex N-glycans; the final hydrolytic step in the N-glycan maturation pathway.</text>
</comment>
<comment type="catalytic activity">
    <reaction evidence="7">
        <text>N(4)-{beta-D-GlcNAc-(1-&gt;2)-alpha-D-Man-(1-&gt;3)-[alpha-D-Man-(1-&gt;3)-[alpha-D-Man-(1-&gt;6)]-alpha-D-Man-(1-&gt;6)]-beta-D-Man-(1-&gt;4)-beta-D-GlcNAc-(1-&gt;4)-beta-D-GlcNAc}-L-asparaginyl-[protein] + 2 H2O = 2 alpha-D-mannopyranose + an N(4)-{beta-D-GlcNAc-(1-&gt;2)-alpha-D-Man-(1-&gt;3)-[alpha-D-Man-(1-&gt;6)]-beta-D-Man-(1-&gt;4)-beta-D-GlcNAc-(1-&gt;4)-beta-D-GlcNAc}-L-asparaginyl-[protein]</text>
        <dbReference type="Rhea" id="RHEA:56052"/>
        <dbReference type="Rhea" id="RHEA-COMP:14368"/>
        <dbReference type="Rhea" id="RHEA-COMP:14369"/>
        <dbReference type="ChEBI" id="CHEBI:15377"/>
        <dbReference type="ChEBI" id="CHEBI:28729"/>
        <dbReference type="ChEBI" id="CHEBI:60615"/>
        <dbReference type="ChEBI" id="CHEBI:60625"/>
        <dbReference type="EC" id="3.2.1.114"/>
    </reaction>
</comment>
<comment type="cofactor">
    <cofactor evidence="6">
        <name>Zn(2+)</name>
        <dbReference type="ChEBI" id="CHEBI:29105"/>
    </cofactor>
    <text evidence="6">Binds 1 zinc ion per subunit.</text>
</comment>
<comment type="activity regulation">
    <text evidence="7">Inhibited by swainsonine.</text>
</comment>
<comment type="pathway">
    <text evidence="1">Protein modification; protein glycosylation.</text>
</comment>
<comment type="subunit">
    <text evidence="1">Homodimer; disulfide-linked.</text>
</comment>
<comment type="subcellular location">
    <subcellularLocation>
        <location evidence="7">Microsome membrane</location>
        <topology evidence="7">Single-pass type II membrane protein</topology>
    </subcellularLocation>
    <subcellularLocation>
        <location evidence="2">Golgi apparatus membrane</location>
        <topology evidence="9">Single-pass type II membrane protein</topology>
    </subcellularLocation>
</comment>
<comment type="PTM">
    <text evidence="7">N-glycosylated.</text>
</comment>
<comment type="similarity">
    <text evidence="6">Belongs to the glycosyl hydrolase 38 family.</text>
</comment>
<keyword id="KW-1015">Disulfide bond</keyword>
<keyword id="KW-0256">Endoplasmic reticulum</keyword>
<keyword id="KW-0325">Glycoprotein</keyword>
<keyword id="KW-0326">Glycosidase</keyword>
<keyword id="KW-0333">Golgi apparatus</keyword>
<keyword id="KW-0378">Hydrolase</keyword>
<keyword id="KW-0472">Membrane</keyword>
<keyword id="KW-0479">Metal-binding</keyword>
<keyword id="KW-0492">Microsome</keyword>
<keyword id="KW-0735">Signal-anchor</keyword>
<keyword id="KW-0812">Transmembrane</keyword>
<keyword id="KW-1133">Transmembrane helix</keyword>
<keyword id="KW-0862">Zinc</keyword>
<protein>
    <recommendedName>
        <fullName evidence="9">Alpha-mannosidase 2</fullName>
        <ecNumber evidence="7">3.2.1.114</ecNumber>
    </recommendedName>
    <alternativeName>
        <fullName evidence="8">Alpha-mannosidase II</fullName>
    </alternativeName>
    <alternativeName>
        <fullName evidence="8">Class II alpha-mannosidase</fullName>
    </alternativeName>
    <alternativeName>
        <fullName evidence="9">Mannosyl-oligosaccharide 1,3-1,6-alpha-mannosidase</fullName>
    </alternativeName>
</protein>
<sequence>MRTRVLRCRPFSTRILLLLLFVLAFGVYCYFYNASPQNYNKPRISYPASMEHFKSSLTHTVKSRDEPTPDQCPALKESEADIDTVAIYPTFDFQPSWLRTKEFWDKSFEDRYERIHNDTTRPRLKVIVVPHSHNDPGWLKTFEQYFEWKTKNIINNIVNKLHQYPNMTFIWTEISFLNAWWERSHPVKQKALKKLIKEGRLEITTGGWVMPDEACTHIYALIDQFIEGHHWVKTNLGVIPKTGWSIDPFGHGATVPYLLDQSGLEGTIIQRIHYAWKQWLAERQIEEFYWLASWATTKPSMIVHNQPFDIYSIKSTCGPHPSICLSFDFRKIPGEYSEYTAKHEDITEHNLHSKAKTLIEEYDRIGSLTPHNVVLVPLGDDFRYEYSVEFDAQYVNYMKMFNYINAHKEIFNADVQFGTPLDYFNAMKERHQNIPSLKGDFFVYSDIFSEGKPAYWSGYYTTRPYQKILARQFEHQLRSAEILFTLVSNYIRQMGRQGEFGASEKKLEKSYEQLIYARRNLGLFQHHDAITGTSKSSVMQDYGTKLFTSLYHCIRLQEAALTTIMLPDQSLHSQSIIQSEVEWETYGKPPKKLQVSFIDKKKVILFNPLAETRTEVVTVRSNTSNIRVYDTHKRKHVLYQIMPSITIQDNGKSIVSDTTFDIMFVATIPPLTSISYKLQEHTNTSHHCVIFCNNCEQYQKSNVFQIKKMMPGDIQLENAVLKLLVNRNTGFLRQVYRKDIRKRTVVDVQFGAYQSAQRHSGAYLFMPHYDSPEKNVLHPYTNQNNMQDDNIIIVSGPISTEITTMYLPFLVHTIRIYNVPDPVLSRAILLETDVDFEAPPKNRETELFMRLQTDIQNGDIPEFYTDQNGFQYQKRVKVNKLGIEANYYPITTMACLQDEETRLTLLTNHAQGAAAYEPGRLEVMLDRRTLYDDFRGIGEGVVDNKPTTFQNWILIESMPGVTRAKRDTSEPGFKFVNERRFGPGQKESPYQVPSQTADYLSRMFNYPVNVYLVDTSEVGEIEVKPYQSFLQSFPPGIHLVTLRTITDDVLELFPSNESYMVLHRPGYSCAVGEKPVAKSPKFSSKTRFNGLNIQNITAVSLTGLKSLRPLTGLSDIHLNAMEVKTYKIRF</sequence>
<name>MAN2_SPOFR</name>
<proteinExistence type="evidence at protein level"/>